<dbReference type="EMBL" id="AAAB01008888">
    <property type="protein sequence ID" value="EAU76925.1"/>
    <property type="molecule type" value="Genomic_DNA"/>
</dbReference>
<dbReference type="RefSeq" id="XP_001230939.1">
    <property type="nucleotide sequence ID" value="XM_001230938.2"/>
</dbReference>
<dbReference type="RefSeq" id="XP_003436563.1">
    <property type="nucleotide sequence ID" value="XM_003436515.1"/>
</dbReference>
<dbReference type="PaxDb" id="7165-AGAP003675-PB"/>
<dbReference type="EnsemblMetazoa" id="AGAP003675-RA">
    <property type="protein sequence ID" value="AGAP003675-PA"/>
    <property type="gene ID" value="AGAP003675"/>
</dbReference>
<dbReference type="EnsemblMetazoa" id="AGAP003675-RB">
    <property type="protein sequence ID" value="AGAP003675-PB"/>
    <property type="gene ID" value="AGAP003675"/>
</dbReference>
<dbReference type="GeneID" id="4576842"/>
<dbReference type="KEGG" id="aga:4576842"/>
<dbReference type="VEuPathDB" id="VectorBase:AGAMI1_013658"/>
<dbReference type="VEuPathDB" id="VectorBase:AGAP003675"/>
<dbReference type="eggNOG" id="ENOG502T8PQ">
    <property type="taxonomic scope" value="Eukaryota"/>
</dbReference>
<dbReference type="HOGENOM" id="CLU_1866778_0_0_1"/>
<dbReference type="InParanoid" id="A0NDK8"/>
<dbReference type="Proteomes" id="UP000007062">
    <property type="component" value="Chromosome 2R"/>
</dbReference>
<dbReference type="GO" id="GO:0005576">
    <property type="term" value="C:extracellular region"/>
    <property type="evidence" value="ECO:0000250"/>
    <property type="project" value="UniProtKB"/>
</dbReference>
<dbReference type="GO" id="GO:0071858">
    <property type="term" value="F:corazonin receptor binding"/>
    <property type="evidence" value="ECO:0007669"/>
    <property type="project" value="InterPro"/>
</dbReference>
<dbReference type="GO" id="GO:0005184">
    <property type="term" value="F:neuropeptide hormone activity"/>
    <property type="evidence" value="ECO:0000250"/>
    <property type="project" value="UniProtKB"/>
</dbReference>
<dbReference type="GO" id="GO:0007218">
    <property type="term" value="P:neuropeptide signaling pathway"/>
    <property type="evidence" value="ECO:0007669"/>
    <property type="project" value="UniProtKB-KW"/>
</dbReference>
<dbReference type="GO" id="GO:0045823">
    <property type="term" value="P:positive regulation of heart contraction"/>
    <property type="evidence" value="ECO:0000250"/>
    <property type="project" value="UniProtKB"/>
</dbReference>
<dbReference type="InterPro" id="IPR020190">
    <property type="entry name" value="Procorazonin"/>
</dbReference>
<dbReference type="Pfam" id="PF17308">
    <property type="entry name" value="Corazonin"/>
    <property type="match status" value="1"/>
</dbReference>
<feature type="signal peptide" evidence="1">
    <location>
        <begin position="1"/>
        <end position="20"/>
    </location>
</feature>
<feature type="chain" id="PRO_0000341606" description="Pro-corazonin" evidence="2">
    <location>
        <begin position="21"/>
        <end position="171"/>
    </location>
</feature>
<feature type="peptide" id="PRO_0000341492" description="Corazonin">
    <location>
        <begin position="21"/>
        <end position="31"/>
    </location>
</feature>
<feature type="peptide" id="PRO_0000341493" description="Corazonin precursor-related peptide">
    <location>
        <begin position="35"/>
        <end position="79"/>
    </location>
</feature>
<feature type="propeptide" id="PRO_0000341494" evidence="1">
    <location>
        <begin position="82"/>
        <end position="171"/>
    </location>
</feature>
<feature type="modified residue" description="Pyrrolidone carboxylic acid" evidence="1">
    <location>
        <position position="21"/>
    </location>
</feature>
<feature type="modified residue" description="Asparagine amide" evidence="1">
    <location>
        <position position="31"/>
    </location>
</feature>
<proteinExistence type="inferred from homology"/>
<accession>A0NDK8</accession>
<comment type="function">
    <text evidence="1">Cardioactive peptide. Corazonin is probably involved in the physiological regulation of the heart beat (By similarity).</text>
</comment>
<comment type="subcellular location">
    <molecule>Corazonin</molecule>
    <subcellularLocation>
        <location evidence="1">Secreted</location>
    </subcellularLocation>
</comment>
<comment type="subcellular location">
    <molecule>Corazonin precursor-related peptide</molecule>
    <subcellularLocation>
        <location evidence="1">Secreted</location>
    </subcellularLocation>
</comment>
<comment type="similarity">
    <text evidence="3">Belongs to the corazonin family.</text>
</comment>
<keyword id="KW-0027">Amidation</keyword>
<keyword id="KW-0165">Cleavage on pair of basic residues</keyword>
<keyword id="KW-0527">Neuropeptide</keyword>
<keyword id="KW-0873">Pyrrolidone carboxylic acid</keyword>
<keyword id="KW-1185">Reference proteome</keyword>
<keyword id="KW-0964">Secreted</keyword>
<keyword id="KW-0732">Signal</keyword>
<sequence length="171" mass="18059">MLHTRTIALLLVGLVVLVNAQTFQYSRGWTNGKRSPLSSSSSSPSSSAAMEPLTANQLLASALSSGGLNSLKPSEKALLRRFLRNPCDLRVASLLAAAHPTKELFPLAGNSFDSAESAGAAFVLPPFLMDPDESNGGIGGSNLANGRSMEDELRFKRGTATGFSDHRQKIA</sequence>
<name>CORZ_ANOGA</name>
<gene>
    <name evidence="4" type="primary">CRZ</name>
    <name type="ORF">AGAP003675</name>
</gene>
<organism>
    <name type="scientific">Anopheles gambiae</name>
    <name type="common">African malaria mosquito</name>
    <dbReference type="NCBI Taxonomy" id="7165"/>
    <lineage>
        <taxon>Eukaryota</taxon>
        <taxon>Metazoa</taxon>
        <taxon>Ecdysozoa</taxon>
        <taxon>Arthropoda</taxon>
        <taxon>Hexapoda</taxon>
        <taxon>Insecta</taxon>
        <taxon>Pterygota</taxon>
        <taxon>Neoptera</taxon>
        <taxon>Endopterygota</taxon>
        <taxon>Diptera</taxon>
        <taxon>Nematocera</taxon>
        <taxon>Culicoidea</taxon>
        <taxon>Culicidae</taxon>
        <taxon>Anophelinae</taxon>
        <taxon>Anopheles</taxon>
    </lineage>
</organism>
<evidence type="ECO:0000250" key="1">
    <source>
        <dbReference type="UniProtKB" id="Q26377"/>
    </source>
</evidence>
<evidence type="ECO:0000255" key="2"/>
<evidence type="ECO:0000305" key="3"/>
<evidence type="ECO:0000312" key="4">
    <source>
        <dbReference type="EMBL" id="EAU76925.1"/>
    </source>
</evidence>
<reference evidence="4" key="1">
    <citation type="journal article" date="2002" name="Science">
        <title>The genome sequence of the malaria mosquito Anopheles gambiae.</title>
        <authorList>
            <person name="Holt R.A."/>
            <person name="Subramanian G.M."/>
            <person name="Halpern A."/>
            <person name="Sutton G.G."/>
            <person name="Charlab R."/>
            <person name="Nusskern D.R."/>
            <person name="Wincker P."/>
            <person name="Clark A.G."/>
            <person name="Ribeiro J.M.C."/>
            <person name="Wides R."/>
            <person name="Salzberg S.L."/>
            <person name="Loftus B.J."/>
            <person name="Yandell M.D."/>
            <person name="Majoros W.H."/>
            <person name="Rusch D.B."/>
            <person name="Lai Z."/>
            <person name="Kraft C.L."/>
            <person name="Abril J.F."/>
            <person name="Anthouard V."/>
            <person name="Arensburger P."/>
            <person name="Atkinson P.W."/>
            <person name="Baden H."/>
            <person name="de Berardinis V."/>
            <person name="Baldwin D."/>
            <person name="Benes V."/>
            <person name="Biedler J."/>
            <person name="Blass C."/>
            <person name="Bolanos R."/>
            <person name="Boscus D."/>
            <person name="Barnstead M."/>
            <person name="Cai S."/>
            <person name="Center A."/>
            <person name="Chaturverdi K."/>
            <person name="Christophides G.K."/>
            <person name="Chrystal M.A.M."/>
            <person name="Clamp M."/>
            <person name="Cravchik A."/>
            <person name="Curwen V."/>
            <person name="Dana A."/>
            <person name="Delcher A."/>
            <person name="Dew I."/>
            <person name="Evans C.A."/>
            <person name="Flanigan M."/>
            <person name="Grundschober-Freimoser A."/>
            <person name="Friedli L."/>
            <person name="Gu Z."/>
            <person name="Guan P."/>
            <person name="Guigo R."/>
            <person name="Hillenmeyer M.E."/>
            <person name="Hladun S.L."/>
            <person name="Hogan J.R."/>
            <person name="Hong Y.S."/>
            <person name="Hoover J."/>
            <person name="Jaillon O."/>
            <person name="Ke Z."/>
            <person name="Kodira C.D."/>
            <person name="Kokoza E."/>
            <person name="Koutsos A."/>
            <person name="Letunic I."/>
            <person name="Levitsky A.A."/>
            <person name="Liang Y."/>
            <person name="Lin J.-J."/>
            <person name="Lobo N.F."/>
            <person name="Lopez J.R."/>
            <person name="Malek J.A."/>
            <person name="McIntosh T.C."/>
            <person name="Meister S."/>
            <person name="Miller J.R."/>
            <person name="Mobarry C."/>
            <person name="Mongin E."/>
            <person name="Murphy S.D."/>
            <person name="O'Brochta D.A."/>
            <person name="Pfannkoch C."/>
            <person name="Qi R."/>
            <person name="Regier M.A."/>
            <person name="Remington K."/>
            <person name="Shao H."/>
            <person name="Sharakhova M.V."/>
            <person name="Sitter C.D."/>
            <person name="Shetty J."/>
            <person name="Smith T.J."/>
            <person name="Strong R."/>
            <person name="Sun J."/>
            <person name="Thomasova D."/>
            <person name="Ton L.Q."/>
            <person name="Topalis P."/>
            <person name="Tu Z.J."/>
            <person name="Unger M.F."/>
            <person name="Walenz B."/>
            <person name="Wang A.H."/>
            <person name="Wang J."/>
            <person name="Wang M."/>
            <person name="Wang X."/>
            <person name="Woodford K.J."/>
            <person name="Wortman J.R."/>
            <person name="Wu M."/>
            <person name="Yao A."/>
            <person name="Zdobnov E.M."/>
            <person name="Zhang H."/>
            <person name="Zhao Q."/>
            <person name="Zhao S."/>
            <person name="Zhu S.C."/>
            <person name="Zhimulev I."/>
            <person name="Coluzzi M."/>
            <person name="della Torre A."/>
            <person name="Roth C.W."/>
            <person name="Louis C."/>
            <person name="Kalush F."/>
            <person name="Mural R.J."/>
            <person name="Myers E.W."/>
            <person name="Adams M.D."/>
            <person name="Smith H.O."/>
            <person name="Broder S."/>
            <person name="Gardner M.J."/>
            <person name="Fraser C.M."/>
            <person name="Birney E."/>
            <person name="Bork P."/>
            <person name="Brey P.T."/>
            <person name="Venter J.C."/>
            <person name="Weissenbach J."/>
            <person name="Kafatos F.C."/>
            <person name="Collins F.H."/>
            <person name="Hoffman S.L."/>
        </authorList>
    </citation>
    <scope>NUCLEOTIDE SEQUENCE [LARGE SCALE GENOMIC DNA]</scope>
    <source>
        <strain>PEST</strain>
    </source>
</reference>
<protein>
    <recommendedName>
        <fullName>Pro-corazonin</fullName>
        <shortName>Crz</shortName>
    </recommendedName>
    <component>
        <recommendedName>
            <fullName>Corazonin</fullName>
        </recommendedName>
    </component>
    <component>
        <recommendedName>
            <fullName>Corazonin precursor-related peptide</fullName>
            <shortName>CPRP</shortName>
        </recommendedName>
    </component>
</protein>